<accession>Q7NZU6</accession>
<comment type="function">
    <text evidence="1">Involved in lipopolysaccharide (LPS) biosynthesis. Translocates lipid A-core from the inner to the outer leaflet of the inner membrane. Transmembrane domains (TMD) form a pore in the inner membrane and the ATP-binding domain (NBD) is responsible for energy generation.</text>
</comment>
<comment type="catalytic activity">
    <reaction evidence="1">
        <text>ATP + H2O + lipid A-core oligosaccharideSide 1 = ADP + phosphate + lipid A-core oligosaccharideSide 2.</text>
        <dbReference type="EC" id="7.5.2.6"/>
    </reaction>
</comment>
<comment type="subunit">
    <text evidence="1">Homodimer.</text>
</comment>
<comment type="subcellular location">
    <subcellularLocation>
        <location evidence="1">Cell inner membrane</location>
        <topology evidence="1">Multi-pass membrane protein</topology>
    </subcellularLocation>
</comment>
<comment type="domain">
    <text evidence="1">In MsbA the ATP-binding domain (NBD) and the transmembrane domain (TMD) are fused.</text>
</comment>
<comment type="similarity">
    <text evidence="1">Belongs to the ABC transporter superfamily. Lipid exporter (TC 3.A.1.106) family.</text>
</comment>
<name>MSBA_CHRVO</name>
<sequence length="584" mass="63586">MKDSFKNSWAIYRRLLGYLLGYWKVLLLSMLSMAVAALTEPAVAKLLKPLIDGGFVNKDPQVIMWVPLAIIGIYLIRGLAGFINEYTASWLTGQLVQRLRQQMFAKLVNLPARYYDEHQSGRLMSRITNDVNQVTEAGFNVITVTVRDGLTALGMLGLMLTTDWQLTLICLVVMPAVTYCMRLVGQRLRGLARQNQQHMAQMTQVLAESIQCQRAIKVYGGQEREMARFDHTATSVRRNQVKQSAASAANTGVTQLMIACALAAILYFAGLRAQHGGLTAGDFMVFLTAMLGLFAPVKRISSVSQAMQRGLAAAESVFAFIDEPGEPDDGASALPATRGRLSFDAVSFAYPNVDSPALSGIDLEIQPGETVALVGSSGSGKTTLASLVPRFYEPSAGRLLLDGVPLADIPLRQLRGHIALVSQQVELFNDTVAANIAYGREDASREEIVEAARAANAMEFIEGLPDGLETVIGENGARLSGGQRQRLAIARALLKNAPLLILDEATSALDTQSERLVQAALENLMKNRTTIVIAHRLSTIENADRIVVMHQGRLAEQGRHQALLEQGGLYARLHSLQFSEPQAD</sequence>
<gene>
    <name evidence="1" type="primary">msbA</name>
    <name type="ordered locus">CV_0825</name>
</gene>
<dbReference type="EC" id="7.5.2.6" evidence="1"/>
<dbReference type="EMBL" id="AE016825">
    <property type="protein sequence ID" value="AAQ58500.1"/>
    <property type="molecule type" value="Genomic_DNA"/>
</dbReference>
<dbReference type="RefSeq" id="WP_011134380.1">
    <property type="nucleotide sequence ID" value="NC_005085.1"/>
</dbReference>
<dbReference type="SMR" id="Q7NZU6"/>
<dbReference type="STRING" id="243365.CV_0825"/>
<dbReference type="KEGG" id="cvi:CV_0825"/>
<dbReference type="eggNOG" id="COG1132">
    <property type="taxonomic scope" value="Bacteria"/>
</dbReference>
<dbReference type="HOGENOM" id="CLU_000604_84_3_4"/>
<dbReference type="OrthoDB" id="8554730at2"/>
<dbReference type="Proteomes" id="UP000001424">
    <property type="component" value="Chromosome"/>
</dbReference>
<dbReference type="GO" id="GO:0005886">
    <property type="term" value="C:plasma membrane"/>
    <property type="evidence" value="ECO:0007669"/>
    <property type="project" value="UniProtKB-SubCell"/>
</dbReference>
<dbReference type="GO" id="GO:0015421">
    <property type="term" value="F:ABC-type oligopeptide transporter activity"/>
    <property type="evidence" value="ECO:0007669"/>
    <property type="project" value="TreeGrafter"/>
</dbReference>
<dbReference type="GO" id="GO:0005524">
    <property type="term" value="F:ATP binding"/>
    <property type="evidence" value="ECO:0007669"/>
    <property type="project" value="UniProtKB-KW"/>
</dbReference>
<dbReference type="GO" id="GO:0016887">
    <property type="term" value="F:ATP hydrolysis activity"/>
    <property type="evidence" value="ECO:0007669"/>
    <property type="project" value="InterPro"/>
</dbReference>
<dbReference type="GO" id="GO:0034040">
    <property type="term" value="F:ATPase-coupled lipid transmembrane transporter activity"/>
    <property type="evidence" value="ECO:0007669"/>
    <property type="project" value="InterPro"/>
</dbReference>
<dbReference type="CDD" id="cd18552">
    <property type="entry name" value="ABC_6TM_MsbA_like"/>
    <property type="match status" value="1"/>
</dbReference>
<dbReference type="CDD" id="cd03251">
    <property type="entry name" value="ABCC_MsbA"/>
    <property type="match status" value="1"/>
</dbReference>
<dbReference type="FunFam" id="3.40.50.300:FF:000140">
    <property type="entry name" value="Lipid A export ATP-binding/permease protein MsbA"/>
    <property type="match status" value="1"/>
</dbReference>
<dbReference type="Gene3D" id="1.20.1560.10">
    <property type="entry name" value="ABC transporter type 1, transmembrane domain"/>
    <property type="match status" value="1"/>
</dbReference>
<dbReference type="Gene3D" id="3.40.50.300">
    <property type="entry name" value="P-loop containing nucleotide triphosphate hydrolases"/>
    <property type="match status" value="1"/>
</dbReference>
<dbReference type="InterPro" id="IPR003593">
    <property type="entry name" value="AAA+_ATPase"/>
</dbReference>
<dbReference type="InterPro" id="IPR011527">
    <property type="entry name" value="ABC1_TM_dom"/>
</dbReference>
<dbReference type="InterPro" id="IPR036640">
    <property type="entry name" value="ABC1_TM_sf"/>
</dbReference>
<dbReference type="InterPro" id="IPR003439">
    <property type="entry name" value="ABC_transporter-like_ATP-bd"/>
</dbReference>
<dbReference type="InterPro" id="IPR017871">
    <property type="entry name" value="ABC_transporter-like_CS"/>
</dbReference>
<dbReference type="InterPro" id="IPR011917">
    <property type="entry name" value="ABC_transpr_lipidA"/>
</dbReference>
<dbReference type="InterPro" id="IPR027417">
    <property type="entry name" value="P-loop_NTPase"/>
</dbReference>
<dbReference type="InterPro" id="IPR039421">
    <property type="entry name" value="Type_1_exporter"/>
</dbReference>
<dbReference type="NCBIfam" id="TIGR02203">
    <property type="entry name" value="MsbA_lipidA"/>
    <property type="match status" value="1"/>
</dbReference>
<dbReference type="PANTHER" id="PTHR43394:SF1">
    <property type="entry name" value="ATP-BINDING CASSETTE SUB-FAMILY B MEMBER 10, MITOCHONDRIAL"/>
    <property type="match status" value="1"/>
</dbReference>
<dbReference type="PANTHER" id="PTHR43394">
    <property type="entry name" value="ATP-DEPENDENT PERMEASE MDL1, MITOCHONDRIAL"/>
    <property type="match status" value="1"/>
</dbReference>
<dbReference type="Pfam" id="PF00664">
    <property type="entry name" value="ABC_membrane"/>
    <property type="match status" value="1"/>
</dbReference>
<dbReference type="Pfam" id="PF00005">
    <property type="entry name" value="ABC_tran"/>
    <property type="match status" value="1"/>
</dbReference>
<dbReference type="SMART" id="SM00382">
    <property type="entry name" value="AAA"/>
    <property type="match status" value="1"/>
</dbReference>
<dbReference type="SUPFAM" id="SSF90123">
    <property type="entry name" value="ABC transporter transmembrane region"/>
    <property type="match status" value="1"/>
</dbReference>
<dbReference type="SUPFAM" id="SSF52540">
    <property type="entry name" value="P-loop containing nucleoside triphosphate hydrolases"/>
    <property type="match status" value="1"/>
</dbReference>
<dbReference type="PROSITE" id="PS50929">
    <property type="entry name" value="ABC_TM1F"/>
    <property type="match status" value="1"/>
</dbReference>
<dbReference type="PROSITE" id="PS00211">
    <property type="entry name" value="ABC_TRANSPORTER_1"/>
    <property type="match status" value="1"/>
</dbReference>
<dbReference type="PROSITE" id="PS50893">
    <property type="entry name" value="ABC_TRANSPORTER_2"/>
    <property type="match status" value="1"/>
</dbReference>
<dbReference type="PROSITE" id="PS51239">
    <property type="entry name" value="MSBA"/>
    <property type="match status" value="1"/>
</dbReference>
<protein>
    <recommendedName>
        <fullName evidence="1">ATP-dependent lipid A-core flippase</fullName>
        <ecNumber evidence="1">7.5.2.6</ecNumber>
    </recommendedName>
    <alternativeName>
        <fullName evidence="1">Lipid A export ATP-binding/permease protein MsbA</fullName>
    </alternativeName>
</protein>
<proteinExistence type="inferred from homology"/>
<feature type="chain" id="PRO_0000092574" description="ATP-dependent lipid A-core flippase">
    <location>
        <begin position="1"/>
        <end position="584"/>
    </location>
</feature>
<feature type="transmembrane region" description="Helical" evidence="1">
    <location>
        <begin position="15"/>
        <end position="35"/>
    </location>
</feature>
<feature type="transmembrane region" description="Helical" evidence="1">
    <location>
        <begin position="63"/>
        <end position="83"/>
    </location>
</feature>
<feature type="transmembrane region" description="Helical" evidence="1">
    <location>
        <begin position="153"/>
        <end position="173"/>
    </location>
</feature>
<feature type="transmembrane region" description="Helical" evidence="1">
    <location>
        <begin position="251"/>
        <end position="271"/>
    </location>
</feature>
<feature type="transmembrane region" description="Helical" evidence="1">
    <location>
        <begin position="277"/>
        <end position="297"/>
    </location>
</feature>
<feature type="domain" description="ABC transmembrane type-1" evidence="1">
    <location>
        <begin position="27"/>
        <end position="309"/>
    </location>
</feature>
<feature type="domain" description="ABC transporter" evidence="1">
    <location>
        <begin position="341"/>
        <end position="576"/>
    </location>
</feature>
<feature type="binding site" evidence="1">
    <location>
        <begin position="375"/>
        <end position="382"/>
    </location>
    <ligand>
        <name>ATP</name>
        <dbReference type="ChEBI" id="CHEBI:30616"/>
    </ligand>
</feature>
<keyword id="KW-0067">ATP-binding</keyword>
<keyword id="KW-0997">Cell inner membrane</keyword>
<keyword id="KW-1003">Cell membrane</keyword>
<keyword id="KW-0445">Lipid transport</keyword>
<keyword id="KW-0472">Membrane</keyword>
<keyword id="KW-0547">Nucleotide-binding</keyword>
<keyword id="KW-1185">Reference proteome</keyword>
<keyword id="KW-1278">Translocase</keyword>
<keyword id="KW-0812">Transmembrane</keyword>
<keyword id="KW-1133">Transmembrane helix</keyword>
<keyword id="KW-0813">Transport</keyword>
<evidence type="ECO:0000255" key="1">
    <source>
        <dbReference type="HAMAP-Rule" id="MF_01703"/>
    </source>
</evidence>
<organism>
    <name type="scientific">Chromobacterium violaceum (strain ATCC 12472 / DSM 30191 / JCM 1249 / CCUG 213 / NBRC 12614 / NCIMB 9131 / NCTC 9757 / MK)</name>
    <dbReference type="NCBI Taxonomy" id="243365"/>
    <lineage>
        <taxon>Bacteria</taxon>
        <taxon>Pseudomonadati</taxon>
        <taxon>Pseudomonadota</taxon>
        <taxon>Betaproteobacteria</taxon>
        <taxon>Neisseriales</taxon>
        <taxon>Chromobacteriaceae</taxon>
        <taxon>Chromobacterium</taxon>
    </lineage>
</organism>
<reference key="1">
    <citation type="journal article" date="2003" name="Proc. Natl. Acad. Sci. U.S.A.">
        <title>The complete genome sequence of Chromobacterium violaceum reveals remarkable and exploitable bacterial adaptability.</title>
        <authorList>
            <person name="Vasconcelos A.T.R."/>
            <person name="de Almeida D.F."/>
            <person name="Hungria M."/>
            <person name="Guimaraes C.T."/>
            <person name="Antonio R.V."/>
            <person name="Almeida F.C."/>
            <person name="de Almeida L.G.P."/>
            <person name="de Almeida R."/>
            <person name="Alves-Gomes J.A."/>
            <person name="Andrade E.M."/>
            <person name="Araripe J."/>
            <person name="de Araujo M.F.F."/>
            <person name="Astolfi-Filho S."/>
            <person name="Azevedo V."/>
            <person name="Baptista A.J."/>
            <person name="Bataus L.A.M."/>
            <person name="Batista J.S."/>
            <person name="Belo A."/>
            <person name="van den Berg C."/>
            <person name="Bogo M."/>
            <person name="Bonatto S."/>
            <person name="Bordignon J."/>
            <person name="Brigido M.M."/>
            <person name="Brito C.A."/>
            <person name="Brocchi M."/>
            <person name="Burity H.A."/>
            <person name="Camargo A.A."/>
            <person name="Cardoso D.D.P."/>
            <person name="Carneiro N.P."/>
            <person name="Carraro D.M."/>
            <person name="Carvalho C.M.B."/>
            <person name="Cascardo J.C.M."/>
            <person name="Cavada B.S."/>
            <person name="Chueire L.M.O."/>
            <person name="Creczynski-Pasa T.B."/>
            <person name="Cunha-Junior N.C."/>
            <person name="Fagundes N."/>
            <person name="Falcao C.L."/>
            <person name="Fantinatti F."/>
            <person name="Farias I.P."/>
            <person name="Felipe M.S.S."/>
            <person name="Ferrari L.P."/>
            <person name="Ferro J.A."/>
            <person name="Ferro M.I.T."/>
            <person name="Franco G.R."/>
            <person name="Freitas N.S.A."/>
            <person name="Furlan L.R."/>
            <person name="Gazzinelli R.T."/>
            <person name="Gomes E.A."/>
            <person name="Goncalves P.R."/>
            <person name="Grangeiro T.B."/>
            <person name="Grattapaglia D."/>
            <person name="Grisard E.C."/>
            <person name="Hanna E.S."/>
            <person name="Jardim S.N."/>
            <person name="Laurino J."/>
            <person name="Leoi L.C.T."/>
            <person name="Lima L.F.A."/>
            <person name="Loureiro M.F."/>
            <person name="Lyra M.C.C.P."/>
            <person name="Madeira H.M.F."/>
            <person name="Manfio G.P."/>
            <person name="Maranhao A.Q."/>
            <person name="Martins W.S."/>
            <person name="di Mauro S.M.Z."/>
            <person name="de Medeiros S.R.B."/>
            <person name="Meissner R.V."/>
            <person name="Moreira M.A.M."/>
            <person name="Nascimento F.F."/>
            <person name="Nicolas M.F."/>
            <person name="Oliveira J.G."/>
            <person name="Oliveira S.C."/>
            <person name="Paixao R.F.C."/>
            <person name="Parente J.A."/>
            <person name="Pedrosa F.O."/>
            <person name="Pena S.D.J."/>
            <person name="Pereira J.O."/>
            <person name="Pereira M."/>
            <person name="Pinto L.S.R.C."/>
            <person name="Pinto L.S."/>
            <person name="Porto J.I.R."/>
            <person name="Potrich D.P."/>
            <person name="Ramalho-Neto C.E."/>
            <person name="Reis A.M.M."/>
            <person name="Rigo L.U."/>
            <person name="Rondinelli E."/>
            <person name="Santos E.B.P."/>
            <person name="Santos F.R."/>
            <person name="Schneider M.P.C."/>
            <person name="Seuanez H.N."/>
            <person name="Silva A.M.R."/>
            <person name="da Silva A.L.C."/>
            <person name="Silva D.W."/>
            <person name="Silva R."/>
            <person name="Simoes I.C."/>
            <person name="Simon D."/>
            <person name="Soares C.M.A."/>
            <person name="Soares R.B.A."/>
            <person name="Souza E.M."/>
            <person name="Souza K.R.L."/>
            <person name="Souza R.C."/>
            <person name="Steffens M.B.R."/>
            <person name="Steindel M."/>
            <person name="Teixeira S.R."/>
            <person name="Urmenyi T."/>
            <person name="Vettore A."/>
            <person name="Wassem R."/>
            <person name="Zaha A."/>
            <person name="Simpson A.J.G."/>
        </authorList>
    </citation>
    <scope>NUCLEOTIDE SEQUENCE [LARGE SCALE GENOMIC DNA]</scope>
    <source>
        <strain>ATCC 12472 / DSM 30191 / JCM 1249 / CCUG 213 / NBRC 12614 / NCIMB 9131 / NCTC 9757 / MK</strain>
    </source>
</reference>